<reference key="1">
    <citation type="journal article" date="2001" name="Proc. Natl. Acad. Sci. U.S.A.">
        <title>Complete genome sequence of Caulobacter crescentus.</title>
        <authorList>
            <person name="Nierman W.C."/>
            <person name="Feldblyum T.V."/>
            <person name="Laub M.T."/>
            <person name="Paulsen I.T."/>
            <person name="Nelson K.E."/>
            <person name="Eisen J.A."/>
            <person name="Heidelberg J.F."/>
            <person name="Alley M.R.K."/>
            <person name="Ohta N."/>
            <person name="Maddock J.R."/>
            <person name="Potocka I."/>
            <person name="Nelson W.C."/>
            <person name="Newton A."/>
            <person name="Stephens C."/>
            <person name="Phadke N.D."/>
            <person name="Ely B."/>
            <person name="DeBoy R.T."/>
            <person name="Dodson R.J."/>
            <person name="Durkin A.S."/>
            <person name="Gwinn M.L."/>
            <person name="Haft D.H."/>
            <person name="Kolonay J.F."/>
            <person name="Smit J."/>
            <person name="Craven M.B."/>
            <person name="Khouri H.M."/>
            <person name="Shetty J."/>
            <person name="Berry K.J."/>
            <person name="Utterback T.R."/>
            <person name="Tran K."/>
            <person name="Wolf A.M."/>
            <person name="Vamathevan J.J."/>
            <person name="Ermolaeva M.D."/>
            <person name="White O."/>
            <person name="Salzberg S.L."/>
            <person name="Venter J.C."/>
            <person name="Shapiro L."/>
            <person name="Fraser C.M."/>
        </authorList>
    </citation>
    <scope>NUCLEOTIDE SEQUENCE [LARGE SCALE GENOMIC DNA]</scope>
    <source>
        <strain>ATCC 19089 / CIP 103742 / CB 15</strain>
    </source>
</reference>
<name>IMUB_CAUVC</name>
<sequence>MGLFPGQKAADALALVPDLVTADHDPAADRAALEALCDWCVRFSPAVAIDGDDGLFLDITGTDHLWGGEAAMLVDLVSRLARWGVPARAAIADTAGAAWALARFGPDLAIAPPGEQTAAIATLPVAALRLGDAAEAQLPRLGLHRVGQVLALPRAQLAKRFGLAAVLRLDQALGAASEALTFRRPASPWFDRLAFFEPISAPEDLARVAADALALICARLEAEGRGAKRFEVVFHRLDGRAFPVRVGLARIGRDAQRLARLVKPKLDMVDPGFGIEVVTVHAFAVEPMAAAQARLDADAAASADETLAPLIDRLVNRLGENRVWRADPFESHVPERSVVRVGPLDPPPAARWDPDRPRPVRLFKRPEAIVAIAAELPDYPPRLFTWRGRSHRVRRAEGPERIGQEWWRVGVEKGQTGPGKIRDYYRVEDDTGGRFWIFRQGLYGGEDAPKWWIHGLFG</sequence>
<feature type="chain" id="PRO_0000084190" description="Protein ImuB">
    <location>
        <begin position="1"/>
        <end position="458"/>
    </location>
</feature>
<dbReference type="EMBL" id="AE005673">
    <property type="protein sequence ID" value="AAK25174.1"/>
    <property type="molecule type" value="Genomic_DNA"/>
</dbReference>
<dbReference type="PIR" id="B87647">
    <property type="entry name" value="B87647"/>
</dbReference>
<dbReference type="RefSeq" id="NP_422006.1">
    <property type="nucleotide sequence ID" value="NC_002696.2"/>
</dbReference>
<dbReference type="SMR" id="Q9A3J2"/>
<dbReference type="STRING" id="190650.CC_3212"/>
<dbReference type="EnsemblBacteria" id="AAK25174">
    <property type="protein sequence ID" value="AAK25174"/>
    <property type="gene ID" value="CC_3212"/>
</dbReference>
<dbReference type="KEGG" id="ccr:CC_3212"/>
<dbReference type="PATRIC" id="fig|190650.5.peg.3218"/>
<dbReference type="eggNOG" id="COG0389">
    <property type="taxonomic scope" value="Bacteria"/>
</dbReference>
<dbReference type="HOGENOM" id="CLU_028184_1_1_5"/>
<dbReference type="BioCyc" id="CAULO:CC3212-MONOMER"/>
<dbReference type="Proteomes" id="UP000001816">
    <property type="component" value="Chromosome"/>
</dbReference>
<dbReference type="GO" id="GO:0006281">
    <property type="term" value="P:DNA repair"/>
    <property type="evidence" value="ECO:0007669"/>
    <property type="project" value="UniProtKB-KW"/>
</dbReference>
<dbReference type="CDD" id="cd03468">
    <property type="entry name" value="PolY_like"/>
    <property type="match status" value="1"/>
</dbReference>
<dbReference type="InterPro" id="IPR043502">
    <property type="entry name" value="DNA/RNA_pol_sf"/>
</dbReference>
<dbReference type="InterPro" id="IPR050356">
    <property type="entry name" value="SulA_CellDiv_inhibitor"/>
</dbReference>
<dbReference type="InterPro" id="IPR001126">
    <property type="entry name" value="UmuC"/>
</dbReference>
<dbReference type="PANTHER" id="PTHR35369:SF2">
    <property type="entry name" value="BLR3025 PROTEIN"/>
    <property type="match status" value="1"/>
</dbReference>
<dbReference type="PANTHER" id="PTHR35369">
    <property type="entry name" value="BLR3025 PROTEIN-RELATED"/>
    <property type="match status" value="1"/>
</dbReference>
<dbReference type="Pfam" id="PF00817">
    <property type="entry name" value="IMS"/>
    <property type="match status" value="1"/>
</dbReference>
<dbReference type="SUPFAM" id="SSF56672">
    <property type="entry name" value="DNA/RNA polymerases"/>
    <property type="match status" value="1"/>
</dbReference>
<comment type="function">
    <text evidence="1">Along with DnaE2 and ImuA is required for the error-prone processing of DNA lesions.</text>
</comment>
<organism>
    <name type="scientific">Caulobacter vibrioides (strain ATCC 19089 / CIP 103742 / CB 15)</name>
    <name type="common">Caulobacter crescentus</name>
    <dbReference type="NCBI Taxonomy" id="190650"/>
    <lineage>
        <taxon>Bacteria</taxon>
        <taxon>Pseudomonadati</taxon>
        <taxon>Pseudomonadota</taxon>
        <taxon>Alphaproteobacteria</taxon>
        <taxon>Caulobacterales</taxon>
        <taxon>Caulobacteraceae</taxon>
        <taxon>Caulobacter</taxon>
    </lineage>
</organism>
<accession>Q9A3J2</accession>
<evidence type="ECO:0000250" key="1"/>
<proteinExistence type="inferred from homology"/>
<gene>
    <name type="primary">imuB</name>
    <name type="ordered locus">CC_3212</name>
</gene>
<keyword id="KW-0227">DNA damage</keyword>
<keyword id="KW-0234">DNA repair</keyword>
<keyword id="KW-1185">Reference proteome</keyword>
<protein>
    <recommendedName>
        <fullName>Protein ImuB</fullName>
    </recommendedName>
</protein>